<protein>
    <recommendedName>
        <fullName evidence="1">Chorismate synthase</fullName>
        <shortName evidence="1">CS</shortName>
        <ecNumber evidence="1">4.2.3.5</ecNumber>
    </recommendedName>
    <alternativeName>
        <fullName evidence="1">5-enolpyruvylshikimate-3-phosphate phospholyase</fullName>
    </alternativeName>
</protein>
<gene>
    <name evidence="1" type="primary">aroC</name>
    <name type="ordered locus">SERP1036</name>
</gene>
<accession>Q5HP77</accession>
<reference key="1">
    <citation type="journal article" date="2005" name="J. Bacteriol.">
        <title>Insights on evolution of virulence and resistance from the complete genome analysis of an early methicillin-resistant Staphylococcus aureus strain and a biofilm-producing methicillin-resistant Staphylococcus epidermidis strain.</title>
        <authorList>
            <person name="Gill S.R."/>
            <person name="Fouts D.E."/>
            <person name="Archer G.L."/>
            <person name="Mongodin E.F."/>
            <person name="DeBoy R.T."/>
            <person name="Ravel J."/>
            <person name="Paulsen I.T."/>
            <person name="Kolonay J.F."/>
            <person name="Brinkac L.M."/>
            <person name="Beanan M.J."/>
            <person name="Dodson R.J."/>
            <person name="Daugherty S.C."/>
            <person name="Madupu R."/>
            <person name="Angiuoli S.V."/>
            <person name="Durkin A.S."/>
            <person name="Haft D.H."/>
            <person name="Vamathevan J.J."/>
            <person name="Khouri H."/>
            <person name="Utterback T.R."/>
            <person name="Lee C."/>
            <person name="Dimitrov G."/>
            <person name="Jiang L."/>
            <person name="Qin H."/>
            <person name="Weidman J."/>
            <person name="Tran K."/>
            <person name="Kang K.H."/>
            <person name="Hance I.R."/>
            <person name="Nelson K.E."/>
            <person name="Fraser C.M."/>
        </authorList>
    </citation>
    <scope>NUCLEOTIDE SEQUENCE [LARGE SCALE GENOMIC DNA]</scope>
    <source>
        <strain>ATCC 35984 / DSM 28319 / BCRC 17069 / CCUG 31568 / BM 3577 / RP62A</strain>
    </source>
</reference>
<keyword id="KW-0028">Amino-acid biosynthesis</keyword>
<keyword id="KW-0057">Aromatic amino acid biosynthesis</keyword>
<keyword id="KW-0274">FAD</keyword>
<keyword id="KW-0285">Flavoprotein</keyword>
<keyword id="KW-0288">FMN</keyword>
<keyword id="KW-0456">Lyase</keyword>
<keyword id="KW-0521">NADP</keyword>
<keyword id="KW-1185">Reference proteome</keyword>
<comment type="function">
    <text evidence="1">Catalyzes the anti-1,4-elimination of the C-3 phosphate and the C-6 proR hydrogen from 5-enolpyruvylshikimate-3-phosphate (EPSP) to yield chorismate, which is the branch point compound that serves as the starting substrate for the three terminal pathways of aromatic amino acid biosynthesis. This reaction introduces a second double bond into the aromatic ring system.</text>
</comment>
<comment type="catalytic activity">
    <reaction evidence="1">
        <text>5-O-(1-carboxyvinyl)-3-phosphoshikimate = chorismate + phosphate</text>
        <dbReference type="Rhea" id="RHEA:21020"/>
        <dbReference type="ChEBI" id="CHEBI:29748"/>
        <dbReference type="ChEBI" id="CHEBI:43474"/>
        <dbReference type="ChEBI" id="CHEBI:57701"/>
        <dbReference type="EC" id="4.2.3.5"/>
    </reaction>
</comment>
<comment type="cofactor">
    <cofactor evidence="1">
        <name>FMNH2</name>
        <dbReference type="ChEBI" id="CHEBI:57618"/>
    </cofactor>
    <text evidence="1">Reduced FMN (FMNH(2)).</text>
</comment>
<comment type="pathway">
    <text evidence="1">Metabolic intermediate biosynthesis; chorismate biosynthesis; chorismate from D-erythrose 4-phosphate and phosphoenolpyruvate: step 7/7.</text>
</comment>
<comment type="subunit">
    <text evidence="1">Homotetramer.</text>
</comment>
<comment type="similarity">
    <text evidence="1">Belongs to the chorismate synthase family.</text>
</comment>
<dbReference type="EC" id="4.2.3.5" evidence="1"/>
<dbReference type="EMBL" id="CP000029">
    <property type="protein sequence ID" value="AAW54427.1"/>
    <property type="molecule type" value="Genomic_DNA"/>
</dbReference>
<dbReference type="RefSeq" id="WP_001831020.1">
    <property type="nucleotide sequence ID" value="NC_002976.3"/>
</dbReference>
<dbReference type="SMR" id="Q5HP77"/>
<dbReference type="STRING" id="176279.SERP1036"/>
<dbReference type="GeneID" id="50018723"/>
<dbReference type="KEGG" id="ser:SERP1036"/>
<dbReference type="eggNOG" id="COG0082">
    <property type="taxonomic scope" value="Bacteria"/>
</dbReference>
<dbReference type="HOGENOM" id="CLU_034547_2_0_9"/>
<dbReference type="UniPathway" id="UPA00053">
    <property type="reaction ID" value="UER00090"/>
</dbReference>
<dbReference type="Proteomes" id="UP000000531">
    <property type="component" value="Chromosome"/>
</dbReference>
<dbReference type="GO" id="GO:0005829">
    <property type="term" value="C:cytosol"/>
    <property type="evidence" value="ECO:0007669"/>
    <property type="project" value="TreeGrafter"/>
</dbReference>
<dbReference type="GO" id="GO:0004107">
    <property type="term" value="F:chorismate synthase activity"/>
    <property type="evidence" value="ECO:0007669"/>
    <property type="project" value="UniProtKB-UniRule"/>
</dbReference>
<dbReference type="GO" id="GO:0010181">
    <property type="term" value="F:FMN binding"/>
    <property type="evidence" value="ECO:0007669"/>
    <property type="project" value="TreeGrafter"/>
</dbReference>
<dbReference type="GO" id="GO:0008652">
    <property type="term" value="P:amino acid biosynthetic process"/>
    <property type="evidence" value="ECO:0007669"/>
    <property type="project" value="UniProtKB-KW"/>
</dbReference>
<dbReference type="GO" id="GO:0009073">
    <property type="term" value="P:aromatic amino acid family biosynthetic process"/>
    <property type="evidence" value="ECO:0007669"/>
    <property type="project" value="UniProtKB-KW"/>
</dbReference>
<dbReference type="GO" id="GO:0009423">
    <property type="term" value="P:chorismate biosynthetic process"/>
    <property type="evidence" value="ECO:0007669"/>
    <property type="project" value="UniProtKB-UniRule"/>
</dbReference>
<dbReference type="CDD" id="cd07304">
    <property type="entry name" value="Chorismate_synthase"/>
    <property type="match status" value="1"/>
</dbReference>
<dbReference type="FunFam" id="3.60.150.10:FF:000002">
    <property type="entry name" value="Chorismate synthase"/>
    <property type="match status" value="1"/>
</dbReference>
<dbReference type="Gene3D" id="3.60.150.10">
    <property type="entry name" value="Chorismate synthase AroC"/>
    <property type="match status" value="1"/>
</dbReference>
<dbReference type="HAMAP" id="MF_00300">
    <property type="entry name" value="Chorismate_synth"/>
    <property type="match status" value="1"/>
</dbReference>
<dbReference type="InterPro" id="IPR000453">
    <property type="entry name" value="Chorismate_synth"/>
</dbReference>
<dbReference type="InterPro" id="IPR035904">
    <property type="entry name" value="Chorismate_synth_AroC_sf"/>
</dbReference>
<dbReference type="InterPro" id="IPR020541">
    <property type="entry name" value="Chorismate_synthase_CS"/>
</dbReference>
<dbReference type="NCBIfam" id="TIGR00033">
    <property type="entry name" value="aroC"/>
    <property type="match status" value="1"/>
</dbReference>
<dbReference type="NCBIfam" id="NF003793">
    <property type="entry name" value="PRK05382.1"/>
    <property type="match status" value="1"/>
</dbReference>
<dbReference type="PANTHER" id="PTHR21085">
    <property type="entry name" value="CHORISMATE SYNTHASE"/>
    <property type="match status" value="1"/>
</dbReference>
<dbReference type="PANTHER" id="PTHR21085:SF0">
    <property type="entry name" value="CHORISMATE SYNTHASE"/>
    <property type="match status" value="1"/>
</dbReference>
<dbReference type="Pfam" id="PF01264">
    <property type="entry name" value="Chorismate_synt"/>
    <property type="match status" value="1"/>
</dbReference>
<dbReference type="PIRSF" id="PIRSF001456">
    <property type="entry name" value="Chorismate_synth"/>
    <property type="match status" value="1"/>
</dbReference>
<dbReference type="SUPFAM" id="SSF103263">
    <property type="entry name" value="Chorismate synthase, AroC"/>
    <property type="match status" value="1"/>
</dbReference>
<dbReference type="PROSITE" id="PS00787">
    <property type="entry name" value="CHORISMATE_SYNTHASE_1"/>
    <property type="match status" value="1"/>
</dbReference>
<dbReference type="PROSITE" id="PS00788">
    <property type="entry name" value="CHORISMATE_SYNTHASE_2"/>
    <property type="match status" value="1"/>
</dbReference>
<dbReference type="PROSITE" id="PS00789">
    <property type="entry name" value="CHORISMATE_SYNTHASE_3"/>
    <property type="match status" value="1"/>
</dbReference>
<sequence>MRYLTSGESHGPQLTVIIEGVPANLEIKAEDINKEMFKRQGGYGRGRRMKIEKDTIEIVSGVRNGFTLGSPITLVVTNDDFTHWRKIMGVAPISDEERENMKRTITKPRPGHADLIGGMKYNHRDLRNVLERSSARETAARVAVGAVSKILLEQLDIHLYSRVVEIGGIKDKGLYDVDMFKNNVDKNDVRVIDENIAQQMRDKIDEAKKDGDSIGGVVQVMAENMPIGVGSYVHYDRKLDGRIAQGVVSINAFKGVSFGEGFKAAEKPGSEIQDEIHYNQDSGYFRATNHLGGFEGGMSNGMPIIVNGVMKPIPTLYKPLNSVDINTKEDFKATIERSDSCAVPAASVVCEHVVAFELAKAVLEEFQSNHMDQLVAQIKERRQLNIEF</sequence>
<feature type="chain" id="PRO_0000140649" description="Chorismate synthase">
    <location>
        <begin position="1"/>
        <end position="388"/>
    </location>
</feature>
<feature type="binding site" evidence="1">
    <location>
        <position position="39"/>
    </location>
    <ligand>
        <name>NADP(+)</name>
        <dbReference type="ChEBI" id="CHEBI:58349"/>
    </ligand>
</feature>
<feature type="binding site" evidence="1">
    <location>
        <position position="45"/>
    </location>
    <ligand>
        <name>NADP(+)</name>
        <dbReference type="ChEBI" id="CHEBI:58349"/>
    </ligand>
</feature>
<feature type="binding site" evidence="1">
    <location>
        <begin position="132"/>
        <end position="134"/>
    </location>
    <ligand>
        <name>FMN</name>
        <dbReference type="ChEBI" id="CHEBI:58210"/>
    </ligand>
</feature>
<feature type="binding site" evidence="1">
    <location>
        <begin position="251"/>
        <end position="252"/>
    </location>
    <ligand>
        <name>FMN</name>
        <dbReference type="ChEBI" id="CHEBI:58210"/>
    </ligand>
</feature>
<feature type="binding site" evidence="1">
    <location>
        <position position="296"/>
    </location>
    <ligand>
        <name>FMN</name>
        <dbReference type="ChEBI" id="CHEBI:58210"/>
    </ligand>
</feature>
<feature type="binding site" evidence="1">
    <location>
        <begin position="311"/>
        <end position="315"/>
    </location>
    <ligand>
        <name>FMN</name>
        <dbReference type="ChEBI" id="CHEBI:58210"/>
    </ligand>
</feature>
<feature type="binding site" evidence="1">
    <location>
        <position position="337"/>
    </location>
    <ligand>
        <name>FMN</name>
        <dbReference type="ChEBI" id="CHEBI:58210"/>
    </ligand>
</feature>
<evidence type="ECO:0000255" key="1">
    <source>
        <dbReference type="HAMAP-Rule" id="MF_00300"/>
    </source>
</evidence>
<proteinExistence type="inferred from homology"/>
<organism>
    <name type="scientific">Staphylococcus epidermidis (strain ATCC 35984 / DSM 28319 / BCRC 17069 / CCUG 31568 / BM 3577 / RP62A)</name>
    <dbReference type="NCBI Taxonomy" id="176279"/>
    <lineage>
        <taxon>Bacteria</taxon>
        <taxon>Bacillati</taxon>
        <taxon>Bacillota</taxon>
        <taxon>Bacilli</taxon>
        <taxon>Bacillales</taxon>
        <taxon>Staphylococcaceae</taxon>
        <taxon>Staphylococcus</taxon>
    </lineage>
</organism>
<name>AROC_STAEQ</name>